<sequence>MPSGFQQIGSEDGEPPRQRVTGTLVLAVFSAVLGSLQFGYNIGVINAPQKVIEQSYNETWLGRQGPEGPGSIPPGTLTTLWALSVAIFSVGGMISSFLIGIISQWLGRKRAMLFNNALAVLGGTLMGLAKAAASYEMLILGRFFIGAYSGLTSGLVPMYVGEIAPTHLRGALGTLNQLAIVTGILIAQVLGLESMLGTATLWPLLLGITVLPALLQMVLLPLCPESPRYLYIIRNLEGPARKSLKRLTGWADVSEVLAELKEEKRKLERERPLSLLQLLGSHTHRQPLVIAIVLQLSQQLSGINAVFYYSTSIFESAGVEKPAYATIGAGVVNTVFTLVSVFLVERAGRRTLHLLGLAGMCGCAILMTVALLLLERVPAMSYVSIVAIFGFVAFFEIGPGPIPWFIVAELFSQGPRPAAMAVAGFSNWTCNFIIGMGFQYVADAMGPYVFLLFAVLLLGFFIFTFLKVPETRGRTFDQISAVFHRTPSLLEQEVKPSTELEYLGPDEHD</sequence>
<feature type="chain" id="PRO_0000050361" description="Solute carrier family 2, facilitated glucose transporter member 4">
    <location>
        <begin position="1"/>
        <end position="509"/>
    </location>
</feature>
<feature type="topological domain" description="Cytoplasmic" evidence="5">
    <location>
        <begin position="1"/>
        <end position="24"/>
    </location>
</feature>
<feature type="transmembrane region" description="Helical; Name=1" evidence="5">
    <location>
        <begin position="25"/>
        <end position="45"/>
    </location>
</feature>
<feature type="topological domain" description="Extracellular" evidence="5">
    <location>
        <begin position="46"/>
        <end position="81"/>
    </location>
</feature>
<feature type="transmembrane region" description="Helical; Name=2" evidence="5">
    <location>
        <begin position="82"/>
        <end position="102"/>
    </location>
</feature>
<feature type="topological domain" description="Cytoplasmic" evidence="5">
    <location>
        <begin position="103"/>
        <end position="111"/>
    </location>
</feature>
<feature type="transmembrane region" description="Helical; Name=3" evidence="5">
    <location>
        <begin position="112"/>
        <end position="132"/>
    </location>
</feature>
<feature type="topological domain" description="Extracellular" evidence="5">
    <location>
        <begin position="133"/>
        <end position="142"/>
    </location>
</feature>
<feature type="transmembrane region" description="Helical; Name=4" evidence="5">
    <location>
        <begin position="143"/>
        <end position="163"/>
    </location>
</feature>
<feature type="topological domain" description="Cytoplasmic" evidence="5">
    <location>
        <begin position="164"/>
        <end position="171"/>
    </location>
</feature>
<feature type="transmembrane region" description="Helical; Name=5" evidence="5">
    <location>
        <begin position="172"/>
        <end position="192"/>
    </location>
</feature>
<feature type="topological domain" description="Extracellular" evidence="5">
    <location>
        <begin position="193"/>
        <end position="200"/>
    </location>
</feature>
<feature type="transmembrane region" description="Helical; Name=6" evidence="5">
    <location>
        <begin position="201"/>
        <end position="221"/>
    </location>
</feature>
<feature type="topological domain" description="Cytoplasmic" evidence="5">
    <location>
        <begin position="222"/>
        <end position="287"/>
    </location>
</feature>
<feature type="transmembrane region" description="Helical; Name=7" evidence="5">
    <location>
        <begin position="288"/>
        <end position="308"/>
    </location>
</feature>
<feature type="topological domain" description="Extracellular" evidence="5">
    <location>
        <begin position="309"/>
        <end position="323"/>
    </location>
</feature>
<feature type="transmembrane region" description="Helical; Name=8" evidence="5">
    <location>
        <begin position="324"/>
        <end position="344"/>
    </location>
</feature>
<feature type="topological domain" description="Cytoplasmic" evidence="5">
    <location>
        <begin position="345"/>
        <end position="353"/>
    </location>
</feature>
<feature type="transmembrane region" description="Helical; Name=9" evidence="5">
    <location>
        <begin position="354"/>
        <end position="374"/>
    </location>
</feature>
<feature type="topological domain" description="Extracellular" evidence="5">
    <location>
        <begin position="375"/>
        <end position="384"/>
    </location>
</feature>
<feature type="transmembrane region" description="Helical; Name=10" evidence="5">
    <location>
        <begin position="385"/>
        <end position="405"/>
    </location>
</feature>
<feature type="topological domain" description="Cytoplasmic" evidence="5">
    <location>
        <begin position="406"/>
        <end position="417"/>
    </location>
</feature>
<feature type="transmembrane region" description="Helical; Name=11" evidence="5">
    <location>
        <begin position="418"/>
        <end position="438"/>
    </location>
</feature>
<feature type="topological domain" description="Extracellular" evidence="5">
    <location>
        <begin position="439"/>
        <end position="445"/>
    </location>
</feature>
<feature type="transmembrane region" description="Helical; Name=12" evidence="5">
    <location>
        <begin position="446"/>
        <end position="466"/>
    </location>
</feature>
<feature type="topological domain" description="Cytoplasmic" evidence="5">
    <location>
        <begin position="467"/>
        <end position="509"/>
    </location>
</feature>
<feature type="region of interest" description="Interaction with SRFBP1" evidence="3">
    <location>
        <begin position="7"/>
        <end position="13"/>
    </location>
</feature>
<feature type="short sequence motif" description="Dileucine internalization motif" evidence="5">
    <location>
        <begin position="489"/>
        <end position="490"/>
    </location>
</feature>
<feature type="binding site" evidence="1">
    <location>
        <position position="177"/>
    </location>
    <ligand>
        <name>D-glucose</name>
        <dbReference type="ChEBI" id="CHEBI:4167"/>
    </ligand>
</feature>
<feature type="binding site" evidence="1">
    <location>
        <begin position="298"/>
        <end position="299"/>
    </location>
    <ligand>
        <name>D-glucose</name>
        <dbReference type="ChEBI" id="CHEBI:4167"/>
    </ligand>
</feature>
<feature type="binding site" evidence="1">
    <location>
        <position position="304"/>
    </location>
    <ligand>
        <name>D-glucose</name>
        <dbReference type="ChEBI" id="CHEBI:4167"/>
    </ligand>
</feature>
<feature type="binding site" evidence="1">
    <location>
        <position position="333"/>
    </location>
    <ligand>
        <name>D-glucose</name>
        <dbReference type="ChEBI" id="CHEBI:4167"/>
    </ligand>
</feature>
<feature type="binding site" evidence="1">
    <location>
        <position position="396"/>
    </location>
    <ligand>
        <name>D-glucose</name>
        <dbReference type="ChEBI" id="CHEBI:4167"/>
    </ligand>
</feature>
<feature type="binding site" evidence="1">
    <location>
        <position position="404"/>
    </location>
    <ligand>
        <name>D-glucose</name>
        <dbReference type="ChEBI" id="CHEBI:4167"/>
    </ligand>
</feature>
<feature type="modified residue" description="Phosphoserine" evidence="4">
    <location>
        <position position="10"/>
    </location>
</feature>
<feature type="modified residue" description="Phosphoserine; by SGK1" evidence="3">
    <location>
        <position position="274"/>
    </location>
</feature>
<feature type="modified residue" description="Phosphothreonine" evidence="2">
    <location>
        <position position="486"/>
    </location>
</feature>
<feature type="modified residue" description="Phosphoserine" evidence="2">
    <location>
        <position position="488"/>
    </location>
</feature>
<feature type="lipid moiety-binding region" description="S-palmitoyl cysteine" evidence="3">
    <location>
        <position position="223"/>
    </location>
</feature>
<feature type="glycosylation site" description="N-linked (GlcNAc...) asparagine" evidence="5">
    <location>
        <position position="57"/>
    </location>
</feature>
<feature type="sequence conflict" description="In Ref. 1; BAA21105." evidence="7" ref="1">
    <original>A</original>
    <variation>G</variation>
    <location>
        <position position="27"/>
    </location>
</feature>
<feature type="sequence conflict" description="In Ref. 1; BAA21105." evidence="7" ref="1">
    <original>N</original>
    <variation>S</variation>
    <location>
        <position position="115"/>
    </location>
</feature>
<feature type="sequence conflict" description="In Ref. 4; AAB04950." evidence="7" ref="4">
    <original>V</original>
    <variation>D</variation>
    <location>
        <position position="181"/>
    </location>
</feature>
<feature type="sequence conflict" description="In Ref. 1; BAA21105." evidence="7" ref="1">
    <original>P</original>
    <variation>S</variation>
    <location>
        <position position="272"/>
    </location>
</feature>
<feature type="sequence conflict" description="In Ref. 2; AAR24285." evidence="7" ref="2">
    <original>V</original>
    <variation>M</variation>
    <location>
        <position position="293"/>
    </location>
</feature>
<feature type="sequence conflict" description="In Ref. 1; BAA21105." evidence="7" ref="1">
    <original>R</original>
    <variation>H</variation>
    <location>
        <position position="349"/>
    </location>
</feature>
<feature type="sequence conflict" description="In Ref. 1; BAA21105." evidence="7" ref="1">
    <original>G</original>
    <variation>A</variation>
    <location>
        <position position="362"/>
    </location>
</feature>
<feature type="sequence conflict" description="In Ref. 1; BAA21105." evidence="7" ref="1">
    <original>W</original>
    <variation>C</variation>
    <location>
        <position position="404"/>
    </location>
</feature>
<gene>
    <name evidence="3" type="primary">SLC2A4</name>
    <name evidence="6" type="synonym">GLUT4</name>
</gene>
<name>GLUT4_BOVIN</name>
<protein>
    <recommendedName>
        <fullName evidence="7">Solute carrier family 2, facilitated glucose transporter member 4</fullName>
    </recommendedName>
    <alternativeName>
        <fullName evidence="6">Glucose transporter type 4, insulin-responsive</fullName>
        <shortName evidence="6">GLUT-4</shortName>
    </alternativeName>
</protein>
<comment type="function">
    <text evidence="4">Insulin-regulated facilitative glucose transporter, which plays a key role in removal of glucose from circulation. Response to insulin is regulated by its intracellular localization: in the absence of insulin, it is efficiently retained intracellularly within storage compartments in muscle and fat cells. Upon insulin stimulation, translocates from these compartments to the cell surface where it transports glucose from the extracellular milieu into the cell.</text>
</comment>
<comment type="catalytic activity">
    <reaction evidence="4">
        <text>D-glucose(out) = D-glucose(in)</text>
        <dbReference type="Rhea" id="RHEA:60376"/>
        <dbReference type="ChEBI" id="CHEBI:4167"/>
    </reaction>
</comment>
<comment type="subunit">
    <text evidence="2 3 4">Binds to DAXX. Interacts via its N-terminus with SRFBP1 (By similarity). Interacts with NDUFA9 (By similarity). Interacts with TRARG1; the interaction is required for proper SLC2A4 recycling after insulin stimulation (By similarity).</text>
</comment>
<comment type="subcellular location">
    <subcellularLocation>
        <location evidence="2">Cell membrane</location>
        <topology evidence="2">Multi-pass membrane protein</topology>
    </subcellularLocation>
    <subcellularLocation>
        <location evidence="2">Endomembrane system</location>
        <topology evidence="2">Multi-pass membrane protein</topology>
    </subcellularLocation>
    <subcellularLocation>
        <location evidence="2">Cytoplasm</location>
        <location evidence="2">Perinuclear region</location>
    </subcellularLocation>
    <text evidence="2 3">Localizes primarily to the perinuclear region, undergoing continued recycling to the plasma membrane where it is rapidly reinternalized (By similarity). The dileucine internalization motif is critical for intracellular sequestration (By similarity). Insulin stimulation induces translocation to the cell membrane (By similarity).</text>
</comment>
<comment type="domain">
    <text evidence="3">The dileucine internalization motif is critical for intracellular sequestration.</text>
</comment>
<comment type="PTM">
    <text evidence="3">Sumoylated.</text>
</comment>
<comment type="PTM">
    <text evidence="3">Palmitoylated. Palmitoylation by ZDHHC7 controls the insulin-dependent translocation of GLUT4 to the plasma membrane.</text>
</comment>
<comment type="miscellaneous">
    <text evidence="2">Insulin-stimulated phosphorylation of TBC1D4 is required for GLUT4 translocation.</text>
</comment>
<comment type="similarity">
    <text evidence="7">Belongs to the major facilitator superfamily. Sugar transporter (TC 2.A.1.1) family. Glucose transporter subfamily.</text>
</comment>
<accession>Q27994</accession>
<accession>P79104</accession>
<accession>Q29RP5</accession>
<accession>Q6SI69</accession>
<organism>
    <name type="scientific">Bos taurus</name>
    <name type="common">Bovine</name>
    <dbReference type="NCBI Taxonomy" id="9913"/>
    <lineage>
        <taxon>Eukaryota</taxon>
        <taxon>Metazoa</taxon>
        <taxon>Chordata</taxon>
        <taxon>Craniata</taxon>
        <taxon>Vertebrata</taxon>
        <taxon>Euteleostomi</taxon>
        <taxon>Mammalia</taxon>
        <taxon>Eutheria</taxon>
        <taxon>Laurasiatheria</taxon>
        <taxon>Artiodactyla</taxon>
        <taxon>Ruminantia</taxon>
        <taxon>Pecora</taxon>
        <taxon>Bovidae</taxon>
        <taxon>Bovinae</taxon>
        <taxon>Bos</taxon>
    </lineage>
</organism>
<reference key="1">
    <citation type="journal article" date="1997" name="J. Anim. Sci.">
        <title>Molecular cloning and mRNA expression of the bovine insulin-responsive glucose transporter (GLUT4).</title>
        <authorList>
            <person name="Abe H."/>
            <person name="Morimatsu M."/>
            <person name="Nikami H."/>
            <person name="Miyashige T."/>
            <person name="Saito M."/>
        </authorList>
    </citation>
    <scope>NUCLEOTIDE SEQUENCE [MRNA]</scope>
    <source>
        <strain>Holstein</strain>
        <tissue>White adipose tissue</tissue>
    </source>
</reference>
<reference key="2">
    <citation type="submission" date="2003-11" db="EMBL/GenBank/DDBJ databases">
        <authorList>
            <person name="Kang M.-J."/>
            <person name="Jeong Y.H."/>
            <person name="Lee S.M."/>
            <person name="Park H.Y."/>
            <person name="Yang J.M."/>
            <person name="Mun S.C."/>
            <person name="Yoon D.H."/>
            <person name="Kim D.M."/>
        </authorList>
    </citation>
    <scope>NUCLEOTIDE SEQUENCE [MRNA]</scope>
    <source>
        <strain>Korean</strain>
    </source>
</reference>
<reference key="3">
    <citation type="submission" date="2006-02" db="EMBL/GenBank/DDBJ databases">
        <authorList>
            <consortium name="NIH - Mammalian Gene Collection (MGC) project"/>
        </authorList>
    </citation>
    <scope>NUCLEOTIDE SEQUENCE [LARGE SCALE MRNA]</scope>
    <source>
        <strain>Hereford</strain>
        <tissue>Heart ventricle</tissue>
    </source>
</reference>
<reference key="4">
    <citation type="journal article" date="1996" name="Int. J. Biochem. Cell Biol.">
        <title>Insulin-sensitive glucose transporter transcript levels in calf muscles assessed with a bovine GLUT4 cDNA fragment.</title>
        <authorList>
            <person name="Hocquette J.F."/>
            <person name="Graulet B."/>
            <person name="Castiglia-Delavaud C."/>
            <person name="Bornes F."/>
            <person name="Lepetit N."/>
            <person name="Ferre P."/>
        </authorList>
    </citation>
    <scope>NUCLEOTIDE SEQUENCE [MRNA] OF 108-187</scope>
    <source>
        <tissue>Muscle</tissue>
    </source>
</reference>
<evidence type="ECO:0000250" key="1">
    <source>
        <dbReference type="UniProtKB" id="P11169"/>
    </source>
</evidence>
<evidence type="ECO:0000250" key="2">
    <source>
        <dbReference type="UniProtKB" id="P14142"/>
    </source>
</evidence>
<evidence type="ECO:0000250" key="3">
    <source>
        <dbReference type="UniProtKB" id="P14672"/>
    </source>
</evidence>
<evidence type="ECO:0000250" key="4">
    <source>
        <dbReference type="UniProtKB" id="P19357"/>
    </source>
</evidence>
<evidence type="ECO:0000255" key="5"/>
<evidence type="ECO:0000303" key="6">
    <source>
    </source>
</evidence>
<evidence type="ECO:0000305" key="7"/>
<keyword id="KW-1003">Cell membrane</keyword>
<keyword id="KW-0963">Cytoplasm</keyword>
<keyword id="KW-0325">Glycoprotein</keyword>
<keyword id="KW-0449">Lipoprotein</keyword>
<keyword id="KW-0472">Membrane</keyword>
<keyword id="KW-0564">Palmitate</keyword>
<keyword id="KW-0597">Phosphoprotein</keyword>
<keyword id="KW-1185">Reference proteome</keyword>
<keyword id="KW-0762">Sugar transport</keyword>
<keyword id="KW-0812">Transmembrane</keyword>
<keyword id="KW-1133">Transmembrane helix</keyword>
<keyword id="KW-0813">Transport</keyword>
<keyword id="KW-0832">Ubl conjugation</keyword>
<dbReference type="EMBL" id="D63150">
    <property type="protein sequence ID" value="BAA21105.1"/>
    <property type="molecule type" value="mRNA"/>
</dbReference>
<dbReference type="EMBL" id="AY458600">
    <property type="protein sequence ID" value="AAR24285.1"/>
    <property type="molecule type" value="mRNA"/>
</dbReference>
<dbReference type="EMBL" id="BC114082">
    <property type="protein sequence ID" value="AAI14083.1"/>
    <property type="molecule type" value="mRNA"/>
</dbReference>
<dbReference type="EMBL" id="U18105">
    <property type="protein sequence ID" value="AAB04950.1"/>
    <property type="molecule type" value="mRNA"/>
</dbReference>
<dbReference type="RefSeq" id="NP_777029.1">
    <property type="nucleotide sequence ID" value="NM_174604.1"/>
</dbReference>
<dbReference type="SMR" id="Q27994"/>
<dbReference type="FunCoup" id="Q27994">
    <property type="interactions" value="246"/>
</dbReference>
<dbReference type="STRING" id="9913.ENSBTAP00000012109"/>
<dbReference type="GlyCosmos" id="Q27994">
    <property type="glycosylation" value="1 site, No reported glycans"/>
</dbReference>
<dbReference type="GlyGen" id="Q27994">
    <property type="glycosylation" value="1 site"/>
</dbReference>
<dbReference type="PaxDb" id="9913-ENSBTAP00000012109"/>
<dbReference type="Ensembl" id="ENSBTAT00000012109.7">
    <property type="protein sequence ID" value="ENSBTAP00000012109.5"/>
    <property type="gene ID" value="ENSBTAG00000009190.7"/>
</dbReference>
<dbReference type="GeneID" id="282359"/>
<dbReference type="KEGG" id="bta:282359"/>
<dbReference type="CTD" id="6517"/>
<dbReference type="VEuPathDB" id="HostDB:ENSBTAG00000009190"/>
<dbReference type="VGNC" id="VGNC:34801">
    <property type="gene designation" value="SLC2A4"/>
</dbReference>
<dbReference type="eggNOG" id="KOG0569">
    <property type="taxonomic scope" value="Eukaryota"/>
</dbReference>
<dbReference type="GeneTree" id="ENSGT00940000160688"/>
<dbReference type="HOGENOM" id="CLU_001265_30_5_1"/>
<dbReference type="InParanoid" id="Q27994"/>
<dbReference type="OMA" id="VAQFLCM"/>
<dbReference type="OrthoDB" id="4540492at2759"/>
<dbReference type="TreeFam" id="TF313762"/>
<dbReference type="Reactome" id="R-BTA-189200">
    <property type="pathway name" value="Cellular hexose transport"/>
</dbReference>
<dbReference type="Proteomes" id="UP000009136">
    <property type="component" value="Chromosome 19"/>
</dbReference>
<dbReference type="Bgee" id="ENSBTAG00000009190">
    <property type="expression patterns" value="Expressed in choroid plexus and 96 other cell types or tissues"/>
</dbReference>
<dbReference type="GO" id="GO:0030659">
    <property type="term" value="C:cytoplasmic vesicle membrane"/>
    <property type="evidence" value="ECO:0000250"/>
    <property type="project" value="UniProtKB"/>
</dbReference>
<dbReference type="GO" id="GO:0005829">
    <property type="term" value="C:cytosol"/>
    <property type="evidence" value="ECO:0007669"/>
    <property type="project" value="Ensembl"/>
</dbReference>
<dbReference type="GO" id="GO:0012505">
    <property type="term" value="C:endomembrane system"/>
    <property type="evidence" value="ECO:0000250"/>
    <property type="project" value="UniProtKB"/>
</dbReference>
<dbReference type="GO" id="GO:0005768">
    <property type="term" value="C:endosome"/>
    <property type="evidence" value="ECO:0007669"/>
    <property type="project" value="Ensembl"/>
</dbReference>
<dbReference type="GO" id="GO:0009897">
    <property type="term" value="C:external side of plasma membrane"/>
    <property type="evidence" value="ECO:0007669"/>
    <property type="project" value="Ensembl"/>
</dbReference>
<dbReference type="GO" id="GO:0070062">
    <property type="term" value="C:extracellular exosome"/>
    <property type="evidence" value="ECO:0007669"/>
    <property type="project" value="Ensembl"/>
</dbReference>
<dbReference type="GO" id="GO:0032593">
    <property type="term" value="C:insulin-responsive compartment"/>
    <property type="evidence" value="ECO:0000250"/>
    <property type="project" value="UniProtKB"/>
</dbReference>
<dbReference type="GO" id="GO:0045121">
    <property type="term" value="C:membrane raft"/>
    <property type="evidence" value="ECO:0007669"/>
    <property type="project" value="Ensembl"/>
</dbReference>
<dbReference type="GO" id="GO:0048471">
    <property type="term" value="C:perinuclear region of cytoplasm"/>
    <property type="evidence" value="ECO:0000250"/>
    <property type="project" value="UniProtKB"/>
</dbReference>
<dbReference type="GO" id="GO:0005886">
    <property type="term" value="C:plasma membrane"/>
    <property type="evidence" value="ECO:0000250"/>
    <property type="project" value="UniProtKB"/>
</dbReference>
<dbReference type="GO" id="GO:0042383">
    <property type="term" value="C:sarcolemma"/>
    <property type="evidence" value="ECO:0007669"/>
    <property type="project" value="Ensembl"/>
</dbReference>
<dbReference type="GO" id="GO:0005802">
    <property type="term" value="C:trans-Golgi network"/>
    <property type="evidence" value="ECO:0007669"/>
    <property type="project" value="Ensembl"/>
</dbReference>
<dbReference type="GO" id="GO:0030140">
    <property type="term" value="C:trans-Golgi network transport vesicle"/>
    <property type="evidence" value="ECO:0007669"/>
    <property type="project" value="Ensembl"/>
</dbReference>
<dbReference type="GO" id="GO:0055056">
    <property type="term" value="F:D-glucose transmembrane transporter activity"/>
    <property type="evidence" value="ECO:0000250"/>
    <property type="project" value="UniProtKB"/>
</dbReference>
<dbReference type="GO" id="GO:0015304">
    <property type="term" value="F:D-glucose uniporter activity"/>
    <property type="evidence" value="ECO:0000250"/>
    <property type="project" value="UniProtKB"/>
</dbReference>
<dbReference type="GO" id="GO:0010021">
    <property type="term" value="P:amylopectin biosynthetic process"/>
    <property type="evidence" value="ECO:0007669"/>
    <property type="project" value="Ensembl"/>
</dbReference>
<dbReference type="GO" id="GO:0050873">
    <property type="term" value="P:brown fat cell differentiation"/>
    <property type="evidence" value="ECO:0007669"/>
    <property type="project" value="Ensembl"/>
</dbReference>
<dbReference type="GO" id="GO:0032869">
    <property type="term" value="P:cellular response to insulin stimulus"/>
    <property type="evidence" value="ECO:0000318"/>
    <property type="project" value="GO_Central"/>
</dbReference>
<dbReference type="GO" id="GO:0071470">
    <property type="term" value="P:cellular response to osmotic stress"/>
    <property type="evidence" value="ECO:0007669"/>
    <property type="project" value="Ensembl"/>
</dbReference>
<dbReference type="GO" id="GO:0071356">
    <property type="term" value="P:cellular response to tumor necrosis factor"/>
    <property type="evidence" value="ECO:0007669"/>
    <property type="project" value="Ensembl"/>
</dbReference>
<dbReference type="GO" id="GO:0046323">
    <property type="term" value="P:D-glucose import"/>
    <property type="evidence" value="ECO:0000318"/>
    <property type="project" value="GO_Central"/>
</dbReference>
<dbReference type="GO" id="GO:1904659">
    <property type="term" value="P:D-glucose transmembrane transport"/>
    <property type="evidence" value="ECO:0000250"/>
    <property type="project" value="UniProtKB"/>
</dbReference>
<dbReference type="GO" id="GO:0070837">
    <property type="term" value="P:dehydroascorbic acid transport"/>
    <property type="evidence" value="ECO:0000318"/>
    <property type="project" value="GO_Central"/>
</dbReference>
<dbReference type="GO" id="GO:0042593">
    <property type="term" value="P:glucose homeostasis"/>
    <property type="evidence" value="ECO:0007669"/>
    <property type="project" value="Ensembl"/>
</dbReference>
<dbReference type="GO" id="GO:0044381">
    <property type="term" value="P:glucose import in response to insulin stimulus"/>
    <property type="evidence" value="ECO:0000250"/>
    <property type="project" value="UniProtKB"/>
</dbReference>
<dbReference type="CDD" id="cd17431">
    <property type="entry name" value="MFS_GLUT_Class1"/>
    <property type="match status" value="1"/>
</dbReference>
<dbReference type="FunFam" id="1.20.1250.20:FF:000029">
    <property type="entry name" value="solute carrier family 2, facilitated glucose transporter member 4"/>
    <property type="match status" value="1"/>
</dbReference>
<dbReference type="Gene3D" id="1.20.1250.20">
    <property type="entry name" value="MFS general substrate transporter like domains"/>
    <property type="match status" value="1"/>
</dbReference>
<dbReference type="InterPro" id="IPR002441">
    <property type="entry name" value="Glc_transpt_4"/>
</dbReference>
<dbReference type="InterPro" id="IPR045263">
    <property type="entry name" value="GLUT"/>
</dbReference>
<dbReference type="InterPro" id="IPR020846">
    <property type="entry name" value="MFS_dom"/>
</dbReference>
<dbReference type="InterPro" id="IPR005828">
    <property type="entry name" value="MFS_sugar_transport-like"/>
</dbReference>
<dbReference type="InterPro" id="IPR036259">
    <property type="entry name" value="MFS_trans_sf"/>
</dbReference>
<dbReference type="InterPro" id="IPR003663">
    <property type="entry name" value="Sugar/inositol_transpt"/>
</dbReference>
<dbReference type="InterPro" id="IPR005829">
    <property type="entry name" value="Sugar_transporter_CS"/>
</dbReference>
<dbReference type="NCBIfam" id="TIGR00879">
    <property type="entry name" value="SP"/>
    <property type="match status" value="1"/>
</dbReference>
<dbReference type="PANTHER" id="PTHR23503">
    <property type="entry name" value="SOLUTE CARRIER FAMILY 2"/>
    <property type="match status" value="1"/>
</dbReference>
<dbReference type="PANTHER" id="PTHR23503:SF120">
    <property type="entry name" value="SOLUTE CARRIER FAMILY 2, FACILITATED GLUCOSE TRANSPORTER MEMBER 4"/>
    <property type="match status" value="1"/>
</dbReference>
<dbReference type="Pfam" id="PF00083">
    <property type="entry name" value="Sugar_tr"/>
    <property type="match status" value="1"/>
</dbReference>
<dbReference type="PRINTS" id="PR01193">
    <property type="entry name" value="GLUCTRSPORT4"/>
</dbReference>
<dbReference type="PRINTS" id="PR00171">
    <property type="entry name" value="SUGRTRNSPORT"/>
</dbReference>
<dbReference type="SUPFAM" id="SSF103473">
    <property type="entry name" value="MFS general substrate transporter"/>
    <property type="match status" value="1"/>
</dbReference>
<dbReference type="PROSITE" id="PS50850">
    <property type="entry name" value="MFS"/>
    <property type="match status" value="1"/>
</dbReference>
<dbReference type="PROSITE" id="PS00216">
    <property type="entry name" value="SUGAR_TRANSPORT_1"/>
    <property type="match status" value="1"/>
</dbReference>
<dbReference type="PROSITE" id="PS00217">
    <property type="entry name" value="SUGAR_TRANSPORT_2"/>
    <property type="match status" value="1"/>
</dbReference>
<proteinExistence type="evidence at transcript level"/>